<reference key="1">
    <citation type="journal article" date="1997" name="Nature">
        <title>The complete genome sequence of the gastric pathogen Helicobacter pylori.</title>
        <authorList>
            <person name="Tomb J.-F."/>
            <person name="White O."/>
            <person name="Kerlavage A.R."/>
            <person name="Clayton R.A."/>
            <person name="Sutton G.G."/>
            <person name="Fleischmann R.D."/>
            <person name="Ketchum K.A."/>
            <person name="Klenk H.-P."/>
            <person name="Gill S.R."/>
            <person name="Dougherty B.A."/>
            <person name="Nelson K.E."/>
            <person name="Quackenbush J."/>
            <person name="Zhou L."/>
            <person name="Kirkness E.F."/>
            <person name="Peterson S.N."/>
            <person name="Loftus B.J."/>
            <person name="Richardson D.L."/>
            <person name="Dodson R.J."/>
            <person name="Khalak H.G."/>
            <person name="Glodek A."/>
            <person name="McKenney K."/>
            <person name="FitzGerald L.M."/>
            <person name="Lee N."/>
            <person name="Adams M.D."/>
            <person name="Hickey E.K."/>
            <person name="Berg D.E."/>
            <person name="Gocayne J.D."/>
            <person name="Utterback T.R."/>
            <person name="Peterson J.D."/>
            <person name="Kelley J.M."/>
            <person name="Cotton M.D."/>
            <person name="Weidman J.F."/>
            <person name="Fujii C."/>
            <person name="Bowman C."/>
            <person name="Watthey L."/>
            <person name="Wallin E."/>
            <person name="Hayes W.S."/>
            <person name="Borodovsky M."/>
            <person name="Karp P.D."/>
            <person name="Smith H.O."/>
            <person name="Fraser C.M."/>
            <person name="Venter J.C."/>
        </authorList>
    </citation>
    <scope>NUCLEOTIDE SEQUENCE [LARGE SCALE GENOMIC DNA]</scope>
    <source>
        <strain>ATCC 700392 / 26695</strain>
    </source>
</reference>
<comment type="similarity">
    <text evidence="1">Belongs to the bacterial ribosomal protein bL28 family.</text>
</comment>
<evidence type="ECO:0000255" key="1">
    <source>
        <dbReference type="HAMAP-Rule" id="MF_00373"/>
    </source>
</evidence>
<evidence type="ECO:0000305" key="2"/>
<dbReference type="EMBL" id="AE000511">
    <property type="protein sequence ID" value="AAD07567.1"/>
    <property type="molecule type" value="Genomic_DNA"/>
</dbReference>
<dbReference type="PIR" id="C64581">
    <property type="entry name" value="C64581"/>
</dbReference>
<dbReference type="RefSeq" id="NP_207288.1">
    <property type="nucleotide sequence ID" value="NC_000915.1"/>
</dbReference>
<dbReference type="RefSeq" id="WP_001118998.1">
    <property type="nucleotide sequence ID" value="NC_018939.1"/>
</dbReference>
<dbReference type="SMR" id="P66142"/>
<dbReference type="FunCoup" id="P66142">
    <property type="interactions" value="302"/>
</dbReference>
<dbReference type="IntAct" id="P66142">
    <property type="interactions" value="1"/>
</dbReference>
<dbReference type="STRING" id="85962.HP_0491"/>
<dbReference type="PaxDb" id="85962-C694_02525"/>
<dbReference type="EnsemblBacteria" id="AAD07567">
    <property type="protein sequence ID" value="AAD07567"/>
    <property type="gene ID" value="HP_0491"/>
</dbReference>
<dbReference type="KEGG" id="heo:C694_02525"/>
<dbReference type="KEGG" id="hpy:HP_0491"/>
<dbReference type="PATRIC" id="fig|85962.47.peg.529"/>
<dbReference type="eggNOG" id="COG0227">
    <property type="taxonomic scope" value="Bacteria"/>
</dbReference>
<dbReference type="InParanoid" id="P66142"/>
<dbReference type="Proteomes" id="UP000000429">
    <property type="component" value="Chromosome"/>
</dbReference>
<dbReference type="GO" id="GO:1990904">
    <property type="term" value="C:ribonucleoprotein complex"/>
    <property type="evidence" value="ECO:0007669"/>
    <property type="project" value="UniProtKB-KW"/>
</dbReference>
<dbReference type="GO" id="GO:0005840">
    <property type="term" value="C:ribosome"/>
    <property type="evidence" value="ECO:0007669"/>
    <property type="project" value="UniProtKB-KW"/>
</dbReference>
<dbReference type="GO" id="GO:0003735">
    <property type="term" value="F:structural constituent of ribosome"/>
    <property type="evidence" value="ECO:0007669"/>
    <property type="project" value="InterPro"/>
</dbReference>
<dbReference type="GO" id="GO:0006412">
    <property type="term" value="P:translation"/>
    <property type="evidence" value="ECO:0007669"/>
    <property type="project" value="UniProtKB-UniRule"/>
</dbReference>
<dbReference type="Gene3D" id="2.30.170.40">
    <property type="entry name" value="Ribosomal protein L28/L24"/>
    <property type="match status" value="1"/>
</dbReference>
<dbReference type="HAMAP" id="MF_00373">
    <property type="entry name" value="Ribosomal_bL28"/>
    <property type="match status" value="1"/>
</dbReference>
<dbReference type="InterPro" id="IPR050096">
    <property type="entry name" value="Bacterial_rp_bL28"/>
</dbReference>
<dbReference type="InterPro" id="IPR026569">
    <property type="entry name" value="Ribosomal_bL28"/>
</dbReference>
<dbReference type="InterPro" id="IPR034704">
    <property type="entry name" value="Ribosomal_bL28/bL31-like_sf"/>
</dbReference>
<dbReference type="InterPro" id="IPR001383">
    <property type="entry name" value="Ribosomal_bL28_bact-type"/>
</dbReference>
<dbReference type="InterPro" id="IPR037147">
    <property type="entry name" value="Ribosomal_bL28_sf"/>
</dbReference>
<dbReference type="NCBIfam" id="TIGR00009">
    <property type="entry name" value="L28"/>
    <property type="match status" value="1"/>
</dbReference>
<dbReference type="PANTHER" id="PTHR39080">
    <property type="entry name" value="50S RIBOSOMAL PROTEIN L28"/>
    <property type="match status" value="1"/>
</dbReference>
<dbReference type="PANTHER" id="PTHR39080:SF1">
    <property type="entry name" value="LARGE RIBOSOMAL SUBUNIT PROTEIN BL28A"/>
    <property type="match status" value="1"/>
</dbReference>
<dbReference type="Pfam" id="PF00830">
    <property type="entry name" value="Ribosomal_L28"/>
    <property type="match status" value="1"/>
</dbReference>
<dbReference type="SUPFAM" id="SSF143800">
    <property type="entry name" value="L28p-like"/>
    <property type="match status" value="1"/>
</dbReference>
<gene>
    <name evidence="1" type="primary">rpmB</name>
    <name type="ordered locus">HP_0491</name>
</gene>
<protein>
    <recommendedName>
        <fullName evidence="1">Large ribosomal subunit protein bL28</fullName>
    </recommendedName>
    <alternativeName>
        <fullName evidence="2">50S ribosomal protein L28</fullName>
    </alternativeName>
</protein>
<name>RL28_HELPY</name>
<keyword id="KW-1185">Reference proteome</keyword>
<keyword id="KW-0687">Ribonucleoprotein</keyword>
<keyword id="KW-0689">Ribosomal protein</keyword>
<sequence length="62" mass="6929">MAKRCALTFKGPMIGNHVSHANNKNKRRLLPNLRSIKIQLDDGTTKRIKVAASTLRTMRKGA</sequence>
<proteinExistence type="inferred from homology"/>
<feature type="chain" id="PRO_0000178482" description="Large ribosomal subunit protein bL28">
    <location>
        <begin position="1"/>
        <end position="62"/>
    </location>
</feature>
<organism>
    <name type="scientific">Helicobacter pylori (strain ATCC 700392 / 26695)</name>
    <name type="common">Campylobacter pylori</name>
    <dbReference type="NCBI Taxonomy" id="85962"/>
    <lineage>
        <taxon>Bacteria</taxon>
        <taxon>Pseudomonadati</taxon>
        <taxon>Campylobacterota</taxon>
        <taxon>Epsilonproteobacteria</taxon>
        <taxon>Campylobacterales</taxon>
        <taxon>Helicobacteraceae</taxon>
        <taxon>Helicobacter</taxon>
    </lineage>
</organism>
<accession>P66142</accession>
<accession>P56051</accession>